<proteinExistence type="inferred from homology"/>
<feature type="chain" id="PRO_0000105432" description="Beta sliding clamp">
    <location>
        <begin position="1"/>
        <end position="366"/>
    </location>
</feature>
<feature type="sequence conflict" description="In Ref. 2; AAF38262." evidence="2" ref="2">
    <original>S</original>
    <variation>Y</variation>
    <location>
        <position position="90"/>
    </location>
</feature>
<feature type="sequence conflict" description="In Ref. 1; AAD18487." evidence="2" ref="1">
    <original>T</original>
    <variation>A</variation>
    <location>
        <position position="214"/>
    </location>
</feature>
<accession>Q9Z8K0</accession>
<accession>Q9JSG3</accession>
<accession>Q9K274</accession>
<evidence type="ECO:0000250" key="1">
    <source>
        <dbReference type="UniProtKB" id="P0A988"/>
    </source>
</evidence>
<evidence type="ECO:0000305" key="2"/>
<name>DPO3B_CHLPN</name>
<reference key="1">
    <citation type="journal article" date="1999" name="Nat. Genet.">
        <title>Comparative genomes of Chlamydia pneumoniae and C. trachomatis.</title>
        <authorList>
            <person name="Kalman S."/>
            <person name="Mitchell W.P."/>
            <person name="Marathe R."/>
            <person name="Lammel C.J."/>
            <person name="Fan J."/>
            <person name="Hyman R.W."/>
            <person name="Olinger L."/>
            <person name="Grimwood J."/>
            <person name="Davis R.W."/>
            <person name="Stephens R.S."/>
        </authorList>
    </citation>
    <scope>NUCLEOTIDE SEQUENCE [LARGE SCALE GENOMIC DNA]</scope>
    <source>
        <strain>CWL029</strain>
    </source>
</reference>
<reference key="2">
    <citation type="journal article" date="2000" name="Nucleic Acids Res.">
        <title>Genome sequences of Chlamydia trachomatis MoPn and Chlamydia pneumoniae AR39.</title>
        <authorList>
            <person name="Read T.D."/>
            <person name="Brunham R.C."/>
            <person name="Shen C."/>
            <person name="Gill S.R."/>
            <person name="Heidelberg J.F."/>
            <person name="White O."/>
            <person name="Hickey E.K."/>
            <person name="Peterson J.D."/>
            <person name="Utterback T.R."/>
            <person name="Berry K.J."/>
            <person name="Bass S."/>
            <person name="Linher K.D."/>
            <person name="Weidman J.F."/>
            <person name="Khouri H.M."/>
            <person name="Craven B."/>
            <person name="Bowman C."/>
            <person name="Dodson R.J."/>
            <person name="Gwinn M.L."/>
            <person name="Nelson W.C."/>
            <person name="DeBoy R.T."/>
            <person name="Kolonay J.F."/>
            <person name="McClarty G."/>
            <person name="Salzberg S.L."/>
            <person name="Eisen J.A."/>
            <person name="Fraser C.M."/>
        </authorList>
    </citation>
    <scope>NUCLEOTIDE SEQUENCE [LARGE SCALE GENOMIC DNA]</scope>
    <source>
        <strain>AR39</strain>
    </source>
</reference>
<reference key="3">
    <citation type="journal article" date="2000" name="Nucleic Acids Res.">
        <title>Comparison of whole genome sequences of Chlamydia pneumoniae J138 from Japan and CWL029 from USA.</title>
        <authorList>
            <person name="Shirai M."/>
            <person name="Hirakawa H."/>
            <person name="Kimoto M."/>
            <person name="Tabuchi M."/>
            <person name="Kishi F."/>
            <person name="Ouchi K."/>
            <person name="Shiba T."/>
            <person name="Ishii K."/>
            <person name="Hattori M."/>
            <person name="Kuhara S."/>
            <person name="Nakazawa T."/>
        </authorList>
    </citation>
    <scope>NUCLEOTIDE SEQUENCE [LARGE SCALE GENOMIC DNA]</scope>
    <source>
        <strain>J138</strain>
    </source>
</reference>
<reference key="4">
    <citation type="submission" date="2002-05" db="EMBL/GenBank/DDBJ databases">
        <title>The genome sequence of Chlamydia pneumoniae TW183 and comparison with other Chlamydia strains based on whole genome sequence analysis.</title>
        <authorList>
            <person name="Geng M.M."/>
            <person name="Schuhmacher A."/>
            <person name="Muehldorfer I."/>
            <person name="Bensch K.W."/>
            <person name="Schaefer K.P."/>
            <person name="Schneider S."/>
            <person name="Pohl T."/>
            <person name="Essig A."/>
            <person name="Marre R."/>
            <person name="Melchers K."/>
        </authorList>
    </citation>
    <scope>NUCLEOTIDE SEQUENCE [LARGE SCALE GENOMIC DNA]</scope>
    <source>
        <strain>TW-183</strain>
    </source>
</reference>
<organism>
    <name type="scientific">Chlamydia pneumoniae</name>
    <name type="common">Chlamydophila pneumoniae</name>
    <dbReference type="NCBI Taxonomy" id="83558"/>
    <lineage>
        <taxon>Bacteria</taxon>
        <taxon>Pseudomonadati</taxon>
        <taxon>Chlamydiota</taxon>
        <taxon>Chlamydiia</taxon>
        <taxon>Chlamydiales</taxon>
        <taxon>Chlamydiaceae</taxon>
        <taxon>Chlamydia/Chlamydophila group</taxon>
        <taxon>Chlamydia</taxon>
    </lineage>
</organism>
<gene>
    <name type="primary">dnaN</name>
    <name type="ordered locus">CPn_0338</name>
    <name type="ordered locus">CP_0419</name>
    <name type="ordered locus">CpB0347</name>
</gene>
<sequence length="366" mass="40365">MKFVVSRNELGNLIKKIQSVVPQNTPIPVLTHVLIETYNDELVFTATDLTVSTRCVTKAKVYEKGAISIPSKRFFQLVKELTEANLEISSSAGEMAQITSGSSCFRLLSMEKEDFPMLPDIQNALRFSLPAEQLKTMLQRTSFAVSREESRYVLTGVLLAIANGVATIVGTDGKRLAKIDAEVTLDKSFSGEYIIPIKAVEEIIKMCSDEGEATIFLDQDKIAVECDNTLLITKLLSGEFPDFSPVISTESNVKLDLHREELITLLKQVALFTNESSHSVKFSFLPGELTLTANCTKVGEGKVSMAVNYSGELLEIAFNPFFFLDILKHSKDELVSLGISDSYNPGIITDSASGLFVIMPMRLHDD</sequence>
<dbReference type="EMBL" id="AE001363">
    <property type="protein sequence ID" value="AAD18487.1"/>
    <property type="molecule type" value="Genomic_DNA"/>
</dbReference>
<dbReference type="EMBL" id="AE002161">
    <property type="protein sequence ID" value="AAF38262.1"/>
    <property type="molecule type" value="Genomic_DNA"/>
</dbReference>
<dbReference type="EMBL" id="BA000008">
    <property type="protein sequence ID" value="BAA98548.1"/>
    <property type="molecule type" value="Genomic_DNA"/>
</dbReference>
<dbReference type="EMBL" id="AE009440">
    <property type="protein sequence ID" value="AAP98280.1"/>
    <property type="molecule type" value="Genomic_DNA"/>
</dbReference>
<dbReference type="PIR" id="B86533">
    <property type="entry name" value="B86533"/>
</dbReference>
<dbReference type="PIR" id="F81578">
    <property type="entry name" value="F81578"/>
</dbReference>
<dbReference type="PIR" id="H72090">
    <property type="entry name" value="H72090"/>
</dbReference>
<dbReference type="RefSeq" id="NP_224543.1">
    <property type="nucleotide sequence ID" value="NC_000922.1"/>
</dbReference>
<dbReference type="RefSeq" id="WP_010882986.1">
    <property type="nucleotide sequence ID" value="NZ_LN847257.1"/>
</dbReference>
<dbReference type="RefSeq" id="WP_010895312.1">
    <property type="nucleotide sequence ID" value="NZ_LN846995.1"/>
</dbReference>
<dbReference type="SMR" id="Q9Z8K0"/>
<dbReference type="STRING" id="406984.CPK_ORF00848"/>
<dbReference type="GeneID" id="45050386"/>
<dbReference type="KEGG" id="cpa:CP_0419"/>
<dbReference type="KEGG" id="cpj:dnaN"/>
<dbReference type="KEGG" id="cpn:CPn_0338"/>
<dbReference type="KEGG" id="cpt:CpB0347"/>
<dbReference type="PATRIC" id="fig|115713.3.peg.374"/>
<dbReference type="eggNOG" id="COG0592">
    <property type="taxonomic scope" value="Bacteria"/>
</dbReference>
<dbReference type="HOGENOM" id="CLU_038149_1_1_0"/>
<dbReference type="OrthoDB" id="8421503at2"/>
<dbReference type="Proteomes" id="UP000000583">
    <property type="component" value="Chromosome"/>
</dbReference>
<dbReference type="Proteomes" id="UP000000801">
    <property type="component" value="Chromosome"/>
</dbReference>
<dbReference type="GO" id="GO:0005737">
    <property type="term" value="C:cytoplasm"/>
    <property type="evidence" value="ECO:0007669"/>
    <property type="project" value="UniProtKB-SubCell"/>
</dbReference>
<dbReference type="GO" id="GO:0009360">
    <property type="term" value="C:DNA polymerase III complex"/>
    <property type="evidence" value="ECO:0007669"/>
    <property type="project" value="InterPro"/>
</dbReference>
<dbReference type="GO" id="GO:0008408">
    <property type="term" value="F:3'-5' exonuclease activity"/>
    <property type="evidence" value="ECO:0007669"/>
    <property type="project" value="InterPro"/>
</dbReference>
<dbReference type="GO" id="GO:0003677">
    <property type="term" value="F:DNA binding"/>
    <property type="evidence" value="ECO:0007669"/>
    <property type="project" value="UniProtKB-KW"/>
</dbReference>
<dbReference type="GO" id="GO:0003887">
    <property type="term" value="F:DNA-directed DNA polymerase activity"/>
    <property type="evidence" value="ECO:0007669"/>
    <property type="project" value="UniProtKB-KW"/>
</dbReference>
<dbReference type="GO" id="GO:0006271">
    <property type="term" value="P:DNA strand elongation involved in DNA replication"/>
    <property type="evidence" value="ECO:0007669"/>
    <property type="project" value="TreeGrafter"/>
</dbReference>
<dbReference type="CDD" id="cd00140">
    <property type="entry name" value="beta_clamp"/>
    <property type="match status" value="1"/>
</dbReference>
<dbReference type="Gene3D" id="3.70.10.10">
    <property type="match status" value="1"/>
</dbReference>
<dbReference type="Gene3D" id="3.10.150.10">
    <property type="entry name" value="DNA Polymerase III, subunit A, domain 2"/>
    <property type="match status" value="1"/>
</dbReference>
<dbReference type="InterPro" id="IPR046938">
    <property type="entry name" value="DNA_clamp_sf"/>
</dbReference>
<dbReference type="InterPro" id="IPR001001">
    <property type="entry name" value="DNA_polIII_beta"/>
</dbReference>
<dbReference type="InterPro" id="IPR022635">
    <property type="entry name" value="DNA_polIII_beta_C"/>
</dbReference>
<dbReference type="InterPro" id="IPR022637">
    <property type="entry name" value="DNA_polIII_beta_cen"/>
</dbReference>
<dbReference type="InterPro" id="IPR022634">
    <property type="entry name" value="DNA_polIII_beta_N"/>
</dbReference>
<dbReference type="NCBIfam" id="TIGR00663">
    <property type="entry name" value="dnan"/>
    <property type="match status" value="1"/>
</dbReference>
<dbReference type="PANTHER" id="PTHR30478:SF0">
    <property type="entry name" value="BETA SLIDING CLAMP"/>
    <property type="match status" value="1"/>
</dbReference>
<dbReference type="PANTHER" id="PTHR30478">
    <property type="entry name" value="DNA POLYMERASE III SUBUNIT BETA"/>
    <property type="match status" value="1"/>
</dbReference>
<dbReference type="Pfam" id="PF00712">
    <property type="entry name" value="DNA_pol3_beta"/>
    <property type="match status" value="1"/>
</dbReference>
<dbReference type="Pfam" id="PF02767">
    <property type="entry name" value="DNA_pol3_beta_2"/>
    <property type="match status" value="1"/>
</dbReference>
<dbReference type="Pfam" id="PF02768">
    <property type="entry name" value="DNA_pol3_beta_3"/>
    <property type="match status" value="1"/>
</dbReference>
<dbReference type="PIRSF" id="PIRSF000804">
    <property type="entry name" value="DNA_pol_III_b"/>
    <property type="match status" value="1"/>
</dbReference>
<dbReference type="SMART" id="SM00480">
    <property type="entry name" value="POL3Bc"/>
    <property type="match status" value="1"/>
</dbReference>
<dbReference type="SUPFAM" id="SSF55979">
    <property type="entry name" value="DNA clamp"/>
    <property type="match status" value="3"/>
</dbReference>
<keyword id="KW-0963">Cytoplasm</keyword>
<keyword id="KW-0235">DNA replication</keyword>
<keyword id="KW-0238">DNA-binding</keyword>
<keyword id="KW-0239">DNA-directed DNA polymerase</keyword>
<keyword id="KW-0548">Nucleotidyltransferase</keyword>
<keyword id="KW-0808">Transferase</keyword>
<protein>
    <recommendedName>
        <fullName>Beta sliding clamp</fullName>
        <shortName>Beta clamp</shortName>
        <shortName>Sliding clamp</shortName>
    </recommendedName>
    <alternativeName>
        <fullName>Beta-clamp processivity factor</fullName>
    </alternativeName>
    <alternativeName>
        <fullName>DNA polymerase III beta sliding clamp subunit</fullName>
    </alternativeName>
    <alternativeName>
        <fullName>DNA polymerase III subunit beta</fullName>
    </alternativeName>
</protein>
<comment type="function">
    <text evidence="1">Confers DNA tethering and processivity to DNA polymerases and other proteins. Acts as a clamp, forming a ring around DNA (a reaction catalyzed by the clamp-loading complex) which diffuses in an ATP-independent manner freely and bidirectionally along dsDNA. Initially characterized for its ability to contact the catalytic subunit of DNA polymerase III (Pol III), a complex, multichain enzyme responsible for most of the replicative synthesis in bacteria; Pol III exhibits 3'-5' exonuclease proofreading activity. The beta chain is required for initiation of replication as well as for processivity of DNA replication.</text>
</comment>
<comment type="subunit">
    <text evidence="1">Forms a ring-shaped head-to-tail homodimer around DNA which binds and tethers DNA polymerases and other proteins to the DNA. The DNA replisome complex has a single clamp-loading complex (3 tau and 1 each of delta, delta', psi and chi subunits) which binds 3 Pol III cores (1 core on the leading strand and 2 on the lagging strand) each with a beta sliding clamp dimer. Additional proteins in the replisome are other copies of gamma, psi and chi, Ssb, DNA helicase and RNA primase.</text>
</comment>
<comment type="subcellular location">
    <subcellularLocation>
        <location evidence="1">Cytoplasm</location>
    </subcellularLocation>
</comment>
<comment type="similarity">
    <text evidence="2">Belongs to the beta sliding clamp family.</text>
</comment>